<dbReference type="EC" id="2.7.7.23" evidence="1"/>
<dbReference type="EC" id="2.3.1.157" evidence="1"/>
<dbReference type="EMBL" id="BX251412">
    <property type="protein sequence ID" value="CAD67250.1"/>
    <property type="status" value="ALT_INIT"/>
    <property type="molecule type" value="Genomic_DNA"/>
</dbReference>
<dbReference type="RefSeq" id="WP_011096530.1">
    <property type="nucleotide sequence ID" value="NC_004551.1"/>
</dbReference>
<dbReference type="SMR" id="Q83NE5"/>
<dbReference type="GeneID" id="67388367"/>
<dbReference type="KEGG" id="tws:TW584"/>
<dbReference type="HOGENOM" id="CLU_029499_15_2_11"/>
<dbReference type="UniPathway" id="UPA00113">
    <property type="reaction ID" value="UER00532"/>
</dbReference>
<dbReference type="UniPathway" id="UPA00113">
    <property type="reaction ID" value="UER00533"/>
</dbReference>
<dbReference type="UniPathway" id="UPA00973"/>
<dbReference type="GO" id="GO:0005737">
    <property type="term" value="C:cytoplasm"/>
    <property type="evidence" value="ECO:0007669"/>
    <property type="project" value="UniProtKB-SubCell"/>
</dbReference>
<dbReference type="GO" id="GO:0016020">
    <property type="term" value="C:membrane"/>
    <property type="evidence" value="ECO:0007669"/>
    <property type="project" value="GOC"/>
</dbReference>
<dbReference type="GO" id="GO:0019134">
    <property type="term" value="F:glucosamine-1-phosphate N-acetyltransferase activity"/>
    <property type="evidence" value="ECO:0007669"/>
    <property type="project" value="UniProtKB-UniRule"/>
</dbReference>
<dbReference type="GO" id="GO:0000287">
    <property type="term" value="F:magnesium ion binding"/>
    <property type="evidence" value="ECO:0007669"/>
    <property type="project" value="UniProtKB-UniRule"/>
</dbReference>
<dbReference type="GO" id="GO:0003977">
    <property type="term" value="F:UDP-N-acetylglucosamine diphosphorylase activity"/>
    <property type="evidence" value="ECO:0007669"/>
    <property type="project" value="UniProtKB-UniRule"/>
</dbReference>
<dbReference type="GO" id="GO:0000902">
    <property type="term" value="P:cell morphogenesis"/>
    <property type="evidence" value="ECO:0007669"/>
    <property type="project" value="UniProtKB-UniRule"/>
</dbReference>
<dbReference type="GO" id="GO:0071555">
    <property type="term" value="P:cell wall organization"/>
    <property type="evidence" value="ECO:0007669"/>
    <property type="project" value="UniProtKB-KW"/>
</dbReference>
<dbReference type="GO" id="GO:0009245">
    <property type="term" value="P:lipid A biosynthetic process"/>
    <property type="evidence" value="ECO:0007669"/>
    <property type="project" value="UniProtKB-UniRule"/>
</dbReference>
<dbReference type="GO" id="GO:0009252">
    <property type="term" value="P:peptidoglycan biosynthetic process"/>
    <property type="evidence" value="ECO:0007669"/>
    <property type="project" value="UniProtKB-UniRule"/>
</dbReference>
<dbReference type="GO" id="GO:0008360">
    <property type="term" value="P:regulation of cell shape"/>
    <property type="evidence" value="ECO:0007669"/>
    <property type="project" value="UniProtKB-KW"/>
</dbReference>
<dbReference type="GO" id="GO:0006048">
    <property type="term" value="P:UDP-N-acetylglucosamine biosynthetic process"/>
    <property type="evidence" value="ECO:0007669"/>
    <property type="project" value="UniProtKB-UniPathway"/>
</dbReference>
<dbReference type="CDD" id="cd03353">
    <property type="entry name" value="LbH_GlmU_C"/>
    <property type="match status" value="1"/>
</dbReference>
<dbReference type="Gene3D" id="2.160.10.10">
    <property type="entry name" value="Hexapeptide repeat proteins"/>
    <property type="match status" value="1"/>
</dbReference>
<dbReference type="Gene3D" id="3.90.550.10">
    <property type="entry name" value="Spore Coat Polysaccharide Biosynthesis Protein SpsA, Chain A"/>
    <property type="match status" value="2"/>
</dbReference>
<dbReference type="HAMAP" id="MF_01631">
    <property type="entry name" value="GlmU"/>
    <property type="match status" value="1"/>
</dbReference>
<dbReference type="InterPro" id="IPR005882">
    <property type="entry name" value="Bifunctional_GlmU"/>
</dbReference>
<dbReference type="InterPro" id="IPR050065">
    <property type="entry name" value="GlmU-like"/>
</dbReference>
<dbReference type="InterPro" id="IPR038009">
    <property type="entry name" value="GlmU_C_LbH"/>
</dbReference>
<dbReference type="InterPro" id="IPR001451">
    <property type="entry name" value="Hexapep"/>
</dbReference>
<dbReference type="InterPro" id="IPR025877">
    <property type="entry name" value="MobA-like_NTP_Trfase"/>
</dbReference>
<dbReference type="InterPro" id="IPR029044">
    <property type="entry name" value="Nucleotide-diphossugar_trans"/>
</dbReference>
<dbReference type="InterPro" id="IPR011004">
    <property type="entry name" value="Trimer_LpxA-like_sf"/>
</dbReference>
<dbReference type="PANTHER" id="PTHR43584:SF3">
    <property type="entry name" value="BIFUNCTIONAL PROTEIN GLMU"/>
    <property type="match status" value="1"/>
</dbReference>
<dbReference type="PANTHER" id="PTHR43584">
    <property type="entry name" value="NUCLEOTIDYL TRANSFERASE"/>
    <property type="match status" value="1"/>
</dbReference>
<dbReference type="Pfam" id="PF00132">
    <property type="entry name" value="Hexapep"/>
    <property type="match status" value="1"/>
</dbReference>
<dbReference type="Pfam" id="PF12804">
    <property type="entry name" value="NTP_transf_3"/>
    <property type="match status" value="1"/>
</dbReference>
<dbReference type="SUPFAM" id="SSF53448">
    <property type="entry name" value="Nucleotide-diphospho-sugar transferases"/>
    <property type="match status" value="2"/>
</dbReference>
<dbReference type="SUPFAM" id="SSF51161">
    <property type="entry name" value="Trimeric LpxA-like enzymes"/>
    <property type="match status" value="1"/>
</dbReference>
<organism>
    <name type="scientific">Tropheryma whipplei (strain TW08/27)</name>
    <name type="common">Whipple's bacillus</name>
    <dbReference type="NCBI Taxonomy" id="218496"/>
    <lineage>
        <taxon>Bacteria</taxon>
        <taxon>Bacillati</taxon>
        <taxon>Actinomycetota</taxon>
        <taxon>Actinomycetes</taxon>
        <taxon>Micrococcales</taxon>
        <taxon>Tropherymataceae</taxon>
        <taxon>Tropheryma</taxon>
    </lineage>
</organism>
<evidence type="ECO:0000255" key="1">
    <source>
        <dbReference type="HAMAP-Rule" id="MF_01631"/>
    </source>
</evidence>
<evidence type="ECO:0000305" key="2"/>
<sequence length="601" mass="65827">MKSDLAIVILAAGRGTRMRSSTPKVLHNIAGLPMVAHVLRGAQLLKPCKTIVVFRDVRVEQYIRNTFPDVLTVAQSDALYGTGFGVFSAIPWIRSESYGNTYPNTRHESHAEYELDACDLDTCNPASDRLNDQESLKGGRHIHTKSGDVTNNKPFPSRVLILYADVPLVPFQLLEELVRKPLKQAVGAIVTTHLDNPKGYGRVMRDNLGSIAKIIEDSNILPEQSINEVNTGVGIFDTEYLQDALNKLLKCHIAHSPNQDCVTNQDCVTNQDCVTNQDCVTNQDCVTNQDCVPAAHTEAHVLSPKVIVTEQIHKKAESEHQHAGQWMCRQDTVGAQNTKEEMRLTDIVEYFYNNGLRVNSITTSDSELLLGVNNRVQLAKTEKILNDQIIKRWQLYGVTIKSPETTWIDSTVQLSEDVLILPGCILSGRTRIEEGAVIGPFATISDSFIGKNTIVKRAEIIDARIEEGAVIGPFAFIRPGTVIGKDSKVGTFVEIKQSNIGPESKVPHLSYIGDANIGSHVNIGAGNIFANYDGKLKHETCIDDGVKTGAGNVFVAPVKVGRGAYTGAGSVIRDDIEEGALSLTELKQKTIPKWAENRGDG</sequence>
<name>GLMU_TROW8</name>
<feature type="chain" id="PRO_0000244319" description="Bifunctional protein GlmU">
    <location>
        <begin position="1"/>
        <end position="601"/>
    </location>
</feature>
<feature type="region of interest" description="Pyrophosphorylase" evidence="1">
    <location>
        <begin position="1"/>
        <end position="375"/>
    </location>
</feature>
<feature type="region of interest" description="Linker" evidence="1">
    <location>
        <begin position="376"/>
        <end position="396"/>
    </location>
</feature>
<feature type="region of interest" description="N-acetyltransferase" evidence="1">
    <location>
        <begin position="397"/>
        <end position="601"/>
    </location>
</feature>
<feature type="active site" description="Proton acceptor" evidence="1">
    <location>
        <position position="508"/>
    </location>
</feature>
<feature type="binding site" evidence="1">
    <location>
        <begin position="10"/>
        <end position="13"/>
    </location>
    <ligand>
        <name>UDP-N-acetyl-alpha-D-glucosamine</name>
        <dbReference type="ChEBI" id="CHEBI:57705"/>
    </ligand>
</feature>
<feature type="binding site" evidence="1">
    <location>
        <position position="24"/>
    </location>
    <ligand>
        <name>UDP-N-acetyl-alpha-D-glucosamine</name>
        <dbReference type="ChEBI" id="CHEBI:57705"/>
    </ligand>
</feature>
<feature type="binding site" evidence="1">
    <location>
        <position position="75"/>
    </location>
    <ligand>
        <name>UDP-N-acetyl-alpha-D-glucosamine</name>
        <dbReference type="ChEBI" id="CHEBI:57705"/>
    </ligand>
</feature>
<feature type="binding site" evidence="1">
    <location>
        <begin position="81"/>
        <end position="82"/>
    </location>
    <ligand>
        <name>UDP-N-acetyl-alpha-D-glucosamine</name>
        <dbReference type="ChEBI" id="CHEBI:57705"/>
    </ligand>
</feature>
<feature type="binding site" evidence="1">
    <location>
        <position position="165"/>
    </location>
    <ligand>
        <name>Mg(2+)</name>
        <dbReference type="ChEBI" id="CHEBI:18420"/>
    </ligand>
</feature>
<feature type="binding site" evidence="1">
    <location>
        <position position="201"/>
    </location>
    <ligand>
        <name>UDP-N-acetyl-alpha-D-glucosamine</name>
        <dbReference type="ChEBI" id="CHEBI:57705"/>
    </ligand>
</feature>
<feature type="binding site" evidence="1">
    <location>
        <position position="216"/>
    </location>
    <ligand>
        <name>UDP-N-acetyl-alpha-D-glucosamine</name>
        <dbReference type="ChEBI" id="CHEBI:57705"/>
    </ligand>
</feature>
<feature type="binding site" evidence="1">
    <location>
        <position position="230"/>
    </location>
    <ligand>
        <name>UDP-N-acetyl-alpha-D-glucosamine</name>
        <dbReference type="ChEBI" id="CHEBI:57705"/>
    </ligand>
</feature>
<feature type="binding site" evidence="1">
    <location>
        <position position="373"/>
    </location>
    <ligand>
        <name>Mg(2+)</name>
        <dbReference type="ChEBI" id="CHEBI:18420"/>
    </ligand>
</feature>
<feature type="binding site" evidence="1">
    <location>
        <position position="373"/>
    </location>
    <ligand>
        <name>UDP-N-acetyl-alpha-D-glucosamine</name>
        <dbReference type="ChEBI" id="CHEBI:57705"/>
    </ligand>
</feature>
<feature type="binding site" evidence="1">
    <location>
        <position position="478"/>
    </location>
    <ligand>
        <name>UDP-N-acetyl-alpha-D-glucosamine</name>
        <dbReference type="ChEBI" id="CHEBI:57705"/>
    </ligand>
</feature>
<feature type="binding site" evidence="1">
    <location>
        <position position="496"/>
    </location>
    <ligand>
        <name>UDP-N-acetyl-alpha-D-glucosamine</name>
        <dbReference type="ChEBI" id="CHEBI:57705"/>
    </ligand>
</feature>
<feature type="binding site" evidence="1">
    <location>
        <position position="511"/>
    </location>
    <ligand>
        <name>UDP-N-acetyl-alpha-D-glucosamine</name>
        <dbReference type="ChEBI" id="CHEBI:57705"/>
    </ligand>
</feature>
<feature type="binding site" evidence="1">
    <location>
        <position position="522"/>
    </location>
    <ligand>
        <name>UDP-N-acetyl-alpha-D-glucosamine</name>
        <dbReference type="ChEBI" id="CHEBI:57705"/>
    </ligand>
</feature>
<feature type="binding site" evidence="1">
    <location>
        <position position="525"/>
    </location>
    <ligand>
        <name>acetyl-CoA</name>
        <dbReference type="ChEBI" id="CHEBI:57288"/>
    </ligand>
</feature>
<feature type="binding site" evidence="1">
    <location>
        <begin position="531"/>
        <end position="532"/>
    </location>
    <ligand>
        <name>acetyl-CoA</name>
        <dbReference type="ChEBI" id="CHEBI:57288"/>
    </ligand>
</feature>
<feature type="binding site" evidence="1">
    <location>
        <position position="568"/>
    </location>
    <ligand>
        <name>acetyl-CoA</name>
        <dbReference type="ChEBI" id="CHEBI:57288"/>
    </ligand>
</feature>
<keyword id="KW-0012">Acyltransferase</keyword>
<keyword id="KW-0133">Cell shape</keyword>
<keyword id="KW-0961">Cell wall biogenesis/degradation</keyword>
<keyword id="KW-0963">Cytoplasm</keyword>
<keyword id="KW-0460">Magnesium</keyword>
<keyword id="KW-0479">Metal-binding</keyword>
<keyword id="KW-0511">Multifunctional enzyme</keyword>
<keyword id="KW-0548">Nucleotidyltransferase</keyword>
<keyword id="KW-0573">Peptidoglycan synthesis</keyword>
<keyword id="KW-0677">Repeat</keyword>
<keyword id="KW-0808">Transferase</keyword>
<comment type="function">
    <text evidence="1">Catalyzes the last two sequential reactions in the de novo biosynthetic pathway for UDP-N-acetylglucosamine (UDP-GlcNAc). The C-terminal domain catalyzes the transfer of acetyl group from acetyl coenzyme A to glucosamine-1-phosphate (GlcN-1-P) to produce N-acetylglucosamine-1-phosphate (GlcNAc-1-P), which is converted into UDP-GlcNAc by the transfer of uridine 5-monophosphate (from uridine 5-triphosphate), a reaction catalyzed by the N-terminal domain.</text>
</comment>
<comment type="catalytic activity">
    <reaction evidence="1">
        <text>alpha-D-glucosamine 1-phosphate + acetyl-CoA = N-acetyl-alpha-D-glucosamine 1-phosphate + CoA + H(+)</text>
        <dbReference type="Rhea" id="RHEA:13725"/>
        <dbReference type="ChEBI" id="CHEBI:15378"/>
        <dbReference type="ChEBI" id="CHEBI:57287"/>
        <dbReference type="ChEBI" id="CHEBI:57288"/>
        <dbReference type="ChEBI" id="CHEBI:57776"/>
        <dbReference type="ChEBI" id="CHEBI:58516"/>
        <dbReference type="EC" id="2.3.1.157"/>
    </reaction>
</comment>
<comment type="catalytic activity">
    <reaction evidence="1">
        <text>N-acetyl-alpha-D-glucosamine 1-phosphate + UTP + H(+) = UDP-N-acetyl-alpha-D-glucosamine + diphosphate</text>
        <dbReference type="Rhea" id="RHEA:13509"/>
        <dbReference type="ChEBI" id="CHEBI:15378"/>
        <dbReference type="ChEBI" id="CHEBI:33019"/>
        <dbReference type="ChEBI" id="CHEBI:46398"/>
        <dbReference type="ChEBI" id="CHEBI:57705"/>
        <dbReference type="ChEBI" id="CHEBI:57776"/>
        <dbReference type="EC" id="2.7.7.23"/>
    </reaction>
</comment>
<comment type="cofactor">
    <cofactor evidence="1">
        <name>Mg(2+)</name>
        <dbReference type="ChEBI" id="CHEBI:18420"/>
    </cofactor>
    <text evidence="1">Binds 1 Mg(2+) ion per subunit.</text>
</comment>
<comment type="pathway">
    <text evidence="1">Nucleotide-sugar biosynthesis; UDP-N-acetyl-alpha-D-glucosamine biosynthesis; N-acetyl-alpha-D-glucosamine 1-phosphate from alpha-D-glucosamine 6-phosphate (route II): step 2/2.</text>
</comment>
<comment type="pathway">
    <text evidence="1">Nucleotide-sugar biosynthesis; UDP-N-acetyl-alpha-D-glucosamine biosynthesis; UDP-N-acetyl-alpha-D-glucosamine from N-acetyl-alpha-D-glucosamine 1-phosphate: step 1/1.</text>
</comment>
<comment type="pathway">
    <text evidence="1">Bacterial outer membrane biogenesis; LPS lipid A biosynthesis.</text>
</comment>
<comment type="subunit">
    <text evidence="1">Homotrimer.</text>
</comment>
<comment type="subcellular location">
    <subcellularLocation>
        <location evidence="1">Cytoplasm</location>
    </subcellularLocation>
</comment>
<comment type="similarity">
    <text evidence="1">In the N-terminal section; belongs to the N-acetylglucosamine-1-phosphate uridyltransferase family.</text>
</comment>
<comment type="similarity">
    <text evidence="1">In the C-terminal section; belongs to the transferase hexapeptide repeat family.</text>
</comment>
<comment type="sequence caution" evidence="2">
    <conflict type="erroneous initiation">
        <sequence resource="EMBL-CDS" id="CAD67250"/>
    </conflict>
</comment>
<proteinExistence type="inferred from homology"/>
<accession>Q83NE5</accession>
<protein>
    <recommendedName>
        <fullName evidence="1">Bifunctional protein GlmU</fullName>
    </recommendedName>
    <domain>
        <recommendedName>
            <fullName evidence="1">UDP-N-acetylglucosamine pyrophosphorylase</fullName>
            <ecNumber evidence="1">2.7.7.23</ecNumber>
        </recommendedName>
        <alternativeName>
            <fullName evidence="1">N-acetylglucosamine-1-phosphate uridyltransferase</fullName>
        </alternativeName>
    </domain>
    <domain>
        <recommendedName>
            <fullName evidence="1">Glucosamine-1-phosphate N-acetyltransferase</fullName>
            <ecNumber evidence="1">2.3.1.157</ecNumber>
        </recommendedName>
    </domain>
</protein>
<reference key="1">
    <citation type="journal article" date="2003" name="Lancet">
        <title>Sequencing and analysis of the genome of the Whipple's disease bacterium Tropheryma whipplei.</title>
        <authorList>
            <person name="Bentley S.D."/>
            <person name="Maiwald M."/>
            <person name="Murphy L.D."/>
            <person name="Pallen M.J."/>
            <person name="Yeats C.A."/>
            <person name="Dover L.G."/>
            <person name="Norbertczak H.T."/>
            <person name="Besra G.S."/>
            <person name="Quail M.A."/>
            <person name="Harris D.E."/>
            <person name="von Herbay A."/>
            <person name="Goble A."/>
            <person name="Rutter S."/>
            <person name="Squares R."/>
            <person name="Squares S."/>
            <person name="Barrell B.G."/>
            <person name="Parkhill J."/>
            <person name="Relman D.A."/>
        </authorList>
    </citation>
    <scope>NUCLEOTIDE SEQUENCE [LARGE SCALE GENOMIC DNA]</scope>
    <source>
        <strain>TW08/27</strain>
    </source>
</reference>
<gene>
    <name evidence="1" type="primary">glmU</name>
    <name type="ordered locus">TW584</name>
</gene>